<dbReference type="EC" id="2.7.11.1" evidence="1"/>
<dbReference type="EC" id="3.6.4.-" evidence="1"/>
<dbReference type="EMBL" id="AF497977">
    <property type="protein sequence ID" value="AAO12971.1"/>
    <property type="molecule type" value="Genomic_DNA"/>
</dbReference>
<dbReference type="SMR" id="Q8GGL1"/>
<dbReference type="GO" id="GO:0005524">
    <property type="term" value="F:ATP binding"/>
    <property type="evidence" value="ECO:0007669"/>
    <property type="project" value="UniProtKB-UniRule"/>
</dbReference>
<dbReference type="GO" id="GO:0016887">
    <property type="term" value="F:ATP hydrolysis activity"/>
    <property type="evidence" value="ECO:0007669"/>
    <property type="project" value="RHEA"/>
</dbReference>
<dbReference type="GO" id="GO:0003677">
    <property type="term" value="F:DNA binding"/>
    <property type="evidence" value="ECO:0007669"/>
    <property type="project" value="InterPro"/>
</dbReference>
<dbReference type="GO" id="GO:0000287">
    <property type="term" value="F:magnesium ion binding"/>
    <property type="evidence" value="ECO:0007669"/>
    <property type="project" value="UniProtKB-UniRule"/>
</dbReference>
<dbReference type="GO" id="GO:0106310">
    <property type="term" value="F:protein serine kinase activity"/>
    <property type="evidence" value="ECO:0007669"/>
    <property type="project" value="RHEA"/>
</dbReference>
<dbReference type="GO" id="GO:0004674">
    <property type="term" value="F:protein serine/threonine kinase activity"/>
    <property type="evidence" value="ECO:0007669"/>
    <property type="project" value="UniProtKB-KW"/>
</dbReference>
<dbReference type="GO" id="GO:0004712">
    <property type="term" value="F:protein serine/threonine/tyrosine kinase activity"/>
    <property type="evidence" value="ECO:0007669"/>
    <property type="project" value="UniProtKB-UniRule"/>
</dbReference>
<dbReference type="GO" id="GO:0007623">
    <property type="term" value="P:circadian rhythm"/>
    <property type="evidence" value="ECO:0007669"/>
    <property type="project" value="UniProtKB-UniRule"/>
</dbReference>
<dbReference type="GO" id="GO:0042752">
    <property type="term" value="P:regulation of circadian rhythm"/>
    <property type="evidence" value="ECO:0007669"/>
    <property type="project" value="InterPro"/>
</dbReference>
<dbReference type="GO" id="GO:0006355">
    <property type="term" value="P:regulation of DNA-templated transcription"/>
    <property type="evidence" value="ECO:0007669"/>
    <property type="project" value="InterPro"/>
</dbReference>
<dbReference type="CDD" id="cd19485">
    <property type="entry name" value="KaiC-N"/>
    <property type="match status" value="1"/>
</dbReference>
<dbReference type="CDD" id="cd19484">
    <property type="entry name" value="KaiC_C"/>
    <property type="match status" value="1"/>
</dbReference>
<dbReference type="Gene3D" id="3.40.50.300">
    <property type="entry name" value="P-loop containing nucleotide triphosphate hydrolases"/>
    <property type="match status" value="2"/>
</dbReference>
<dbReference type="HAMAP" id="MF_01836">
    <property type="entry name" value="KaiC"/>
    <property type="match status" value="1"/>
</dbReference>
<dbReference type="InterPro" id="IPR051347">
    <property type="entry name" value="Circadian_clock_KaiC-rel"/>
</dbReference>
<dbReference type="InterPro" id="IPR013503">
    <property type="entry name" value="Circadian_KaiC_bact"/>
</dbReference>
<dbReference type="InterPro" id="IPR030665">
    <property type="entry name" value="KaiC"/>
</dbReference>
<dbReference type="InterPro" id="IPR014774">
    <property type="entry name" value="KaiC-like_dom"/>
</dbReference>
<dbReference type="InterPro" id="IPR047222">
    <property type="entry name" value="KaiC_C"/>
</dbReference>
<dbReference type="InterPro" id="IPR010624">
    <property type="entry name" value="KaiC_dom"/>
</dbReference>
<dbReference type="InterPro" id="IPR047221">
    <property type="entry name" value="KaiC_N"/>
</dbReference>
<dbReference type="InterPro" id="IPR027417">
    <property type="entry name" value="P-loop_NTPase"/>
</dbReference>
<dbReference type="NCBIfam" id="TIGR02655">
    <property type="entry name" value="circ_KaiC"/>
    <property type="match status" value="1"/>
</dbReference>
<dbReference type="NCBIfam" id="NF006799">
    <property type="entry name" value="PRK09302.1"/>
    <property type="match status" value="1"/>
</dbReference>
<dbReference type="PANTHER" id="PTHR42926">
    <property type="match status" value="1"/>
</dbReference>
<dbReference type="PANTHER" id="PTHR42926:SF1">
    <property type="entry name" value="CIRCADIAN CLOCK OSCILLATOR PROTEIN KAIC 1"/>
    <property type="match status" value="1"/>
</dbReference>
<dbReference type="Pfam" id="PF06745">
    <property type="entry name" value="ATPase"/>
    <property type="match status" value="2"/>
</dbReference>
<dbReference type="PIRSF" id="PIRSF039117">
    <property type="entry name" value="KaiC"/>
    <property type="match status" value="1"/>
</dbReference>
<dbReference type="SUPFAM" id="SSF52540">
    <property type="entry name" value="P-loop containing nucleoside triphosphate hydrolases"/>
    <property type="match status" value="2"/>
</dbReference>
<dbReference type="PROSITE" id="PS51146">
    <property type="entry name" value="KAIC"/>
    <property type="match status" value="2"/>
</dbReference>
<comment type="function">
    <text evidence="1">Central component of the KaiABC oscillator complex, which constitutes the main circadian regulator in cyanobacteria. Complex composition changes during the circadian cycle to control KaiC phosphorylation. KaiA stimulates KaiC autophosphorylation, while KaiB sequesters KaiA, leading to KaiC autodephosphorylation. Clock output pathways impact the RpaA transcriptional regulator. KaiC enhances the autophosphorylation activity of SasA, which then transfers its phosphate group to RpaA to activate it. KaiB and KaiC together enhance the phospho-RpaA dephosphatase activity of CikA.</text>
</comment>
<comment type="function">
    <text evidence="1">Has a weak, temperature-independent ATPase activity; ATPase activity defines the circadian period. The phosphorylation state of KaiC modulates its ATPase activity and effects KaiB binding.</text>
</comment>
<comment type="catalytic activity">
    <reaction evidence="1">
        <text>L-seryl-[protein] + ATP = O-phospho-L-seryl-[protein] + ADP + H(+)</text>
        <dbReference type="Rhea" id="RHEA:17989"/>
        <dbReference type="Rhea" id="RHEA-COMP:9863"/>
        <dbReference type="Rhea" id="RHEA-COMP:11604"/>
        <dbReference type="ChEBI" id="CHEBI:15378"/>
        <dbReference type="ChEBI" id="CHEBI:29999"/>
        <dbReference type="ChEBI" id="CHEBI:30616"/>
        <dbReference type="ChEBI" id="CHEBI:83421"/>
        <dbReference type="ChEBI" id="CHEBI:456216"/>
        <dbReference type="EC" id="2.7.11.1"/>
    </reaction>
</comment>
<comment type="catalytic activity">
    <reaction evidence="1">
        <text>L-threonyl-[protein] + ATP = O-phospho-L-threonyl-[protein] + ADP + H(+)</text>
        <dbReference type="Rhea" id="RHEA:46608"/>
        <dbReference type="Rhea" id="RHEA-COMP:11060"/>
        <dbReference type="Rhea" id="RHEA-COMP:11605"/>
        <dbReference type="ChEBI" id="CHEBI:15378"/>
        <dbReference type="ChEBI" id="CHEBI:30013"/>
        <dbReference type="ChEBI" id="CHEBI:30616"/>
        <dbReference type="ChEBI" id="CHEBI:61977"/>
        <dbReference type="ChEBI" id="CHEBI:456216"/>
        <dbReference type="EC" id="2.7.11.1"/>
    </reaction>
</comment>
<comment type="catalytic activity">
    <reaction evidence="1">
        <text>ATP + H2O = ADP + phosphate + H(+)</text>
        <dbReference type="Rhea" id="RHEA:13065"/>
        <dbReference type="ChEBI" id="CHEBI:15377"/>
        <dbReference type="ChEBI" id="CHEBI:15378"/>
        <dbReference type="ChEBI" id="CHEBI:30616"/>
        <dbReference type="ChEBI" id="CHEBI:43474"/>
        <dbReference type="ChEBI" id="CHEBI:456216"/>
    </reaction>
</comment>
<comment type="cofactor">
    <cofactor evidence="1">
        <name>Mg(2+)</name>
        <dbReference type="ChEBI" id="CHEBI:18420"/>
    </cofactor>
    <text evidence="1">Binds 2 Mg(2+) ions per subunit, one in each domain. Mg(2+) is required for hexamerization and phosphatase activity.</text>
</comment>
<comment type="activity regulation">
    <text evidence="1">The interaction with KaiA enhances its phosphorylation status, while the interaction with KaiB decreases it.</text>
</comment>
<comment type="subunit">
    <text evidence="1 3">Homohexamer; hexamerization is dependent on ATP-binding (PubMed:12477935). The KaiABC complex composition changes during the circadian cycle to control KaiC phosphorylation. Complexes KaiC(6), KaiA(2-4):KaiC(6), KaiB(6):KaiC(6) and KaiC(6):KaiB(6):KaiA(12) are among the most important forms, many form cooperatively. KaiC interacts with SasA, activating its autokinase function and leading to RpaA activation.</text>
</comment>
<comment type="domain">
    <text evidence="1">In the homohexamer the 2 domains (called CI and CII) self-associate to each form a 'donut' layer; the compactness and local conformation of the domains varies over the cell cycle and impacts function. CII has the autokinase and autophosphatase activities, both CI and CII have (weak) ATPase activity; CI has the clock pacemaker role.</text>
</comment>
<comment type="PTM">
    <text evidence="1">Phosphorylated on serine and threonine residues by autocatalysis. Has a 4 step phosphorylation cycle; the autokinase acts first on Thr-453, then Ser-452. When Ser-452 is modified KaiC switches to an autophosphatase mode, acting first on phospho-Thr-453 then phospho-Ser-452.</text>
</comment>
<comment type="similarity">
    <text evidence="1">Belongs to the KaiC family.</text>
</comment>
<evidence type="ECO:0000255" key="1">
    <source>
        <dbReference type="HAMAP-Rule" id="MF_01836"/>
    </source>
</evidence>
<evidence type="ECO:0000256" key="2">
    <source>
        <dbReference type="SAM" id="MobiDB-lite"/>
    </source>
</evidence>
<evidence type="ECO:0000269" key="3">
    <source>
    </source>
</evidence>
<accession>Q8GGL1</accession>
<feature type="chain" id="PRO_0000217780" description="Circadian clock oscillator protein KaiC">
    <location>
        <begin position="1"/>
        <end position="541"/>
    </location>
</feature>
<feature type="domain" description="KaiC 1" evidence="1">
    <location>
        <begin position="21"/>
        <end position="268"/>
    </location>
</feature>
<feature type="domain" description="KaiC 2" evidence="1">
    <location>
        <begin position="282"/>
        <end position="541"/>
    </location>
</feature>
<feature type="region of interest" description="Disordered" evidence="2">
    <location>
        <begin position="1"/>
        <end position="40"/>
    </location>
</feature>
<feature type="compositionally biased region" description="Basic and acidic residues" evidence="2">
    <location>
        <begin position="26"/>
        <end position="35"/>
    </location>
</feature>
<feature type="binding site" evidence="1">
    <location>
        <position position="70"/>
    </location>
    <ligand>
        <name>ATP</name>
        <dbReference type="ChEBI" id="CHEBI:30616"/>
        <label>1</label>
        <note>ligand shared between homodimeric partners</note>
    </ligand>
</feature>
<feature type="binding site" evidence="1">
    <location>
        <position position="71"/>
    </location>
    <ligand>
        <name>ATP</name>
        <dbReference type="ChEBI" id="CHEBI:30616"/>
        <label>1</label>
        <note>ligand shared between homodimeric partners</note>
    </ligand>
</feature>
<feature type="binding site" evidence="1">
    <location>
        <position position="72"/>
    </location>
    <ligand>
        <name>ATP</name>
        <dbReference type="ChEBI" id="CHEBI:30616"/>
        <label>1</label>
        <note>ligand shared between homodimeric partners</note>
    </ligand>
</feature>
<feature type="binding site" evidence="1">
    <location>
        <position position="73"/>
    </location>
    <ligand>
        <name>ATP</name>
        <dbReference type="ChEBI" id="CHEBI:30616"/>
        <label>1</label>
        <note>ligand shared between homodimeric partners</note>
    </ligand>
</feature>
<feature type="binding site" evidence="1">
    <location>
        <position position="74"/>
    </location>
    <ligand>
        <name>ATP</name>
        <dbReference type="ChEBI" id="CHEBI:30616"/>
        <label>1</label>
        <note>ligand shared between homodimeric partners</note>
    </ligand>
</feature>
<feature type="binding site" evidence="1">
    <location>
        <position position="74"/>
    </location>
    <ligand>
        <name>Mg(2+)</name>
        <dbReference type="ChEBI" id="CHEBI:18420"/>
        <label>1</label>
    </ligand>
</feature>
<feature type="binding site" evidence="1">
    <location>
        <position position="75"/>
    </location>
    <ligand>
        <name>ATP</name>
        <dbReference type="ChEBI" id="CHEBI:30616"/>
        <label>1</label>
        <note>ligand shared between homodimeric partners</note>
    </ligand>
</feature>
<feature type="binding site" evidence="1">
    <location>
        <position position="110"/>
    </location>
    <ligand>
        <name>ATP</name>
        <dbReference type="ChEBI" id="CHEBI:30616"/>
        <label>1</label>
        <note>ligand shared between homodimeric partners</note>
    </ligand>
</feature>
<feature type="binding site" evidence="1">
    <location>
        <position position="245"/>
    </location>
    <ligand>
        <name>ATP</name>
        <dbReference type="ChEBI" id="CHEBI:30616"/>
        <label>1</label>
        <note>ligand shared between homodimeric partners</note>
    </ligand>
</feature>
<feature type="binding site" evidence="1">
    <location>
        <position position="246"/>
    </location>
    <ligand>
        <name>ATP</name>
        <dbReference type="ChEBI" id="CHEBI:30616"/>
        <label>1</label>
        <note>ligand shared between homodimeric partners</note>
    </ligand>
</feature>
<feature type="binding site" evidence="1">
    <location>
        <position position="247"/>
    </location>
    <ligand>
        <name>ATP</name>
        <dbReference type="ChEBI" id="CHEBI:30616"/>
        <label>1</label>
        <note>ligand shared between homodimeric partners</note>
    </ligand>
</feature>
<feature type="binding site" evidence="1">
    <location>
        <position position="249"/>
    </location>
    <ligand>
        <name>ATP</name>
        <dbReference type="ChEBI" id="CHEBI:30616"/>
        <label>1</label>
        <note>ligand shared between homodimeric partners</note>
    </ligand>
</feature>
<feature type="binding site" evidence="1">
    <location>
        <position position="251"/>
    </location>
    <ligand>
        <name>ATP</name>
        <dbReference type="ChEBI" id="CHEBI:30616"/>
        <label>1</label>
        <note>ligand shared between homodimeric partners</note>
    </ligand>
</feature>
<feature type="binding site" evidence="1">
    <location>
        <position position="261"/>
    </location>
    <ligand>
        <name>ATP</name>
        <dbReference type="ChEBI" id="CHEBI:30616"/>
        <label>1</label>
        <note>ligand shared between homodimeric partners</note>
    </ligand>
</feature>
<feature type="binding site" evidence="1">
    <location>
        <position position="311"/>
    </location>
    <ligand>
        <name>ATP</name>
        <dbReference type="ChEBI" id="CHEBI:30616"/>
        <label>2</label>
        <note>ligand shared between homodimeric partners</note>
    </ligand>
</feature>
<feature type="binding site" evidence="1">
    <location>
        <position position="312"/>
    </location>
    <ligand>
        <name>ATP</name>
        <dbReference type="ChEBI" id="CHEBI:30616"/>
        <label>2</label>
        <note>ligand shared between homodimeric partners</note>
    </ligand>
</feature>
<feature type="binding site" evidence="1">
    <location>
        <position position="313"/>
    </location>
    <ligand>
        <name>ATP</name>
        <dbReference type="ChEBI" id="CHEBI:30616"/>
        <label>2</label>
        <note>ligand shared between homodimeric partners</note>
    </ligand>
</feature>
<feature type="binding site" evidence="1">
    <location>
        <position position="314"/>
    </location>
    <ligand>
        <name>ATP</name>
        <dbReference type="ChEBI" id="CHEBI:30616"/>
        <label>2</label>
        <note>ligand shared between homodimeric partners</note>
    </ligand>
</feature>
<feature type="binding site" evidence="1">
    <location>
        <position position="315"/>
    </location>
    <ligand>
        <name>ATP</name>
        <dbReference type="ChEBI" id="CHEBI:30616"/>
        <label>2</label>
        <note>ligand shared between homodimeric partners</note>
    </ligand>
</feature>
<feature type="binding site" evidence="1">
    <location>
        <position position="316"/>
    </location>
    <ligand>
        <name>ATP</name>
        <dbReference type="ChEBI" id="CHEBI:30616"/>
        <label>2</label>
        <note>ligand shared between homodimeric partners</note>
    </ligand>
</feature>
<feature type="binding site" evidence="1">
    <location>
        <position position="316"/>
    </location>
    <ligand>
        <name>Mg(2+)</name>
        <dbReference type="ChEBI" id="CHEBI:18420"/>
        <label>2</label>
    </ligand>
</feature>
<feature type="binding site" evidence="1">
    <location>
        <position position="339"/>
    </location>
    <ligand>
        <name>Mg(2+)</name>
        <dbReference type="ChEBI" id="CHEBI:18420"/>
        <label>2</label>
    </ligand>
</feature>
<feature type="binding site" evidence="1">
    <location>
        <position position="352"/>
    </location>
    <ligand>
        <name>ATP</name>
        <dbReference type="ChEBI" id="CHEBI:30616"/>
        <label>2</label>
        <note>ligand shared between homodimeric partners</note>
    </ligand>
</feature>
<feature type="binding site" evidence="1">
    <location>
        <position position="472"/>
    </location>
    <ligand>
        <name>ATP</name>
        <dbReference type="ChEBI" id="CHEBI:30616"/>
        <label>2</label>
        <note>ligand shared between homodimeric partners</note>
    </ligand>
</feature>
<feature type="binding site" evidence="1">
    <location>
        <position position="478"/>
    </location>
    <ligand>
        <name>ATP</name>
        <dbReference type="ChEBI" id="CHEBI:30616"/>
        <label>2</label>
        <note>ligand shared between homodimeric partners</note>
    </ligand>
</feature>
<feature type="binding site" evidence="1">
    <location>
        <position position="479"/>
    </location>
    <ligand>
        <name>ATP</name>
        <dbReference type="ChEBI" id="CHEBI:30616"/>
        <label>2</label>
        <note>ligand shared between homodimeric partners</note>
    </ligand>
</feature>
<feature type="binding site" evidence="1">
    <location>
        <position position="480"/>
    </location>
    <ligand>
        <name>ATP</name>
        <dbReference type="ChEBI" id="CHEBI:30616"/>
        <label>2</label>
        <note>ligand shared between homodimeric partners</note>
    </ligand>
</feature>
<feature type="binding site" evidence="1">
    <location>
        <position position="482"/>
    </location>
    <ligand>
        <name>ATP</name>
        <dbReference type="ChEBI" id="CHEBI:30616"/>
        <label>2</label>
        <note>ligand shared between homodimeric partners</note>
    </ligand>
</feature>
<feature type="binding site" evidence="1">
    <location>
        <position position="484"/>
    </location>
    <ligand>
        <name>ATP</name>
        <dbReference type="ChEBI" id="CHEBI:30616"/>
        <label>2</label>
        <note>ligand shared between homodimeric partners</note>
    </ligand>
</feature>
<feature type="binding site" evidence="1">
    <location>
        <position position="486"/>
    </location>
    <ligand>
        <name>ATP</name>
        <dbReference type="ChEBI" id="CHEBI:30616"/>
        <label>2</label>
        <note>ligand shared between homodimeric partners</note>
    </ligand>
</feature>
<feature type="modified residue" description="Phosphoserine; by autocatalysis" evidence="1">
    <location>
        <position position="452"/>
    </location>
</feature>
<feature type="modified residue" description="Phosphothreonine; by autocatalysis" evidence="1">
    <location>
        <position position="453"/>
    </location>
</feature>
<proteinExistence type="evidence at protein level"/>
<keyword id="KW-0067">ATP-binding</keyword>
<keyword id="KW-0090">Biological rhythms</keyword>
<keyword id="KW-0378">Hydrolase</keyword>
<keyword id="KW-0418">Kinase</keyword>
<keyword id="KW-0460">Magnesium</keyword>
<keyword id="KW-0479">Metal-binding</keyword>
<keyword id="KW-0547">Nucleotide-binding</keyword>
<keyword id="KW-0597">Phosphoprotein</keyword>
<keyword id="KW-0677">Repeat</keyword>
<keyword id="KW-0723">Serine/threonine-protein kinase</keyword>
<keyword id="KW-0804">Transcription</keyword>
<keyword id="KW-0805">Transcription regulation</keyword>
<keyword id="KW-0808">Transferase</keyword>
<reference key="1">
    <citation type="journal article" date="2002" name="Proc. Natl. Acad. Sci. U.S.A.">
        <title>Circadian clock protein KaiC forms ATP-dependent hexameric rings and binds DNA.</title>
        <authorList>
            <person name="Mori T."/>
            <person name="Saveliev S.V."/>
            <person name="Xu Y."/>
            <person name="Stafford W.F."/>
            <person name="Cox M.M."/>
            <person name="Inman R.B."/>
            <person name="Johnson C.H."/>
        </authorList>
    </citation>
    <scope>NUCLEOTIDE SEQUENCE [GENOMIC DNA]</scope>
    <scope>HEXAMERIZATION</scope>
    <scope>DNA-BINDING</scope>
    <source>
        <strain>P2</strain>
    </source>
</reference>
<sequence>MNQSLGPSEPEKPQDNTAEDSTEPTPDNHRADLSELRGIPKKQTGIEGFEDISHGGLPLGRTTLVSGTSGTGKTLFAMQFLYNGIVKYQEPGIFVTFEETPADIIRNASSFGWDLQALIDRGQLFILDASPDPEGYEVSGNFDLSALIERIQYAIRKYKAKRVSIDSVTAIFQQYDPAGVVRRELFRLTARLKQANVTTVMTTERTDEYGPIARYGVEEFVSDNVVILRNILEGEKRRRTIEILKLRGTTHMKGEYPFTITNDGINIFPLGAMQLTQRSSNVRVSSGIEKLDEMCGGGFFKDSIILATGATGTGKTSLVSKFLERGCLDGERCILFAYEESRAQLSRNASSWGIDLEEFERQGLLKIICAYPESAGLEDHLQKIKTEMMAFKPSRMAIDSLSALARGVSQNAFRQFVIGVTGLAKQEEITGFFTNTTDQFMGSHSITESHISTITDTIILLQYVEIRGEMARALNVFKMRGSWHDKGIREYLISNAGIQIRDSFRGYERIISGSPTRINVDEKNELSRIVQNVQALEEEGL</sequence>
<organism>
    <name type="scientific">Parathermosynechococcus lividus</name>
    <name type="common">Thermostichus lividus</name>
    <dbReference type="NCBI Taxonomy" id="33070"/>
    <lineage>
        <taxon>Bacteria</taxon>
        <taxon>Bacillati</taxon>
        <taxon>Cyanobacteriota</taxon>
        <taxon>Cyanophyceae</taxon>
        <taxon>Acaryochloridales</taxon>
        <taxon>Thermosynechococcaceae</taxon>
        <taxon>Parathermosynechococcus</taxon>
    </lineage>
</organism>
<name>KAIC_PARLV</name>
<protein>
    <recommendedName>
        <fullName evidence="1">Circadian clock oscillator protein KaiC</fullName>
        <ecNumber evidence="1">2.7.11.1</ecNumber>
        <ecNumber evidence="1">3.6.4.-</ecNumber>
    </recommendedName>
</protein>
<gene>
    <name evidence="1" type="primary">kaiC</name>
</gene>